<evidence type="ECO:0000255" key="1">
    <source>
        <dbReference type="HAMAP-Rule" id="MF_03012"/>
    </source>
</evidence>
<evidence type="ECO:0000255" key="2">
    <source>
        <dbReference type="PROSITE-ProRule" id="PRU01185"/>
    </source>
</evidence>
<evidence type="ECO:0000256" key="3">
    <source>
        <dbReference type="SAM" id="MobiDB-lite"/>
    </source>
</evidence>
<accession>A1DC62</accession>
<reference key="1">
    <citation type="journal article" date="2008" name="PLoS Genet.">
        <title>Genomic islands in the pathogenic filamentous fungus Aspergillus fumigatus.</title>
        <authorList>
            <person name="Fedorova N.D."/>
            <person name="Khaldi N."/>
            <person name="Joardar V.S."/>
            <person name="Maiti R."/>
            <person name="Amedeo P."/>
            <person name="Anderson M.J."/>
            <person name="Crabtree J."/>
            <person name="Silva J.C."/>
            <person name="Badger J.H."/>
            <person name="Albarraq A."/>
            <person name="Angiuoli S."/>
            <person name="Bussey H."/>
            <person name="Bowyer P."/>
            <person name="Cotty P.J."/>
            <person name="Dyer P.S."/>
            <person name="Egan A."/>
            <person name="Galens K."/>
            <person name="Fraser-Liggett C.M."/>
            <person name="Haas B.J."/>
            <person name="Inman J.M."/>
            <person name="Kent R."/>
            <person name="Lemieux S."/>
            <person name="Malavazi I."/>
            <person name="Orvis J."/>
            <person name="Roemer T."/>
            <person name="Ronning C.M."/>
            <person name="Sundaram J.P."/>
            <person name="Sutton G."/>
            <person name="Turner G."/>
            <person name="Venter J.C."/>
            <person name="White O.R."/>
            <person name="Whitty B.R."/>
            <person name="Youngman P."/>
            <person name="Wolfe K.H."/>
            <person name="Goldman G.H."/>
            <person name="Wortman J.R."/>
            <person name="Jiang B."/>
            <person name="Denning D.W."/>
            <person name="Nierman W.C."/>
        </authorList>
    </citation>
    <scope>NUCLEOTIDE SEQUENCE [LARGE SCALE GENOMIC DNA]</scope>
    <source>
        <strain>ATCC 1020 / DSM 3700 / CBS 544.65 / FGSC A1164 / JCM 1740 / NRRL 181 / WB 181</strain>
    </source>
</reference>
<organism>
    <name type="scientific">Neosartorya fischeri (strain ATCC 1020 / DSM 3700 / CBS 544.65 / FGSC A1164 / JCM 1740 / NRRL 181 / WB 181)</name>
    <name type="common">Aspergillus fischerianus</name>
    <dbReference type="NCBI Taxonomy" id="331117"/>
    <lineage>
        <taxon>Eukaryota</taxon>
        <taxon>Fungi</taxon>
        <taxon>Dikarya</taxon>
        <taxon>Ascomycota</taxon>
        <taxon>Pezizomycotina</taxon>
        <taxon>Eurotiomycetes</taxon>
        <taxon>Eurotiomycetidae</taxon>
        <taxon>Eurotiales</taxon>
        <taxon>Aspergillaceae</taxon>
        <taxon>Aspergillus</taxon>
        <taxon>Aspergillus subgen. Fumigati</taxon>
    </lineage>
</organism>
<gene>
    <name type="ORF">NFIA_024940</name>
</gene>
<proteinExistence type="inferred from homology"/>
<comment type="function">
    <text evidence="1">Component of the eukaryotic translation initiation factor 3 (eIF-3) complex, which is involved in protein synthesis of a specialized repertoire of mRNAs and, together with other initiation factors, stimulates binding of mRNA and methionyl-tRNAi to the 40S ribosome. The eIF-3 complex specifically targets and initiates translation of a subset of mRNAs involved in cell proliferation.</text>
</comment>
<comment type="subunit">
    <text evidence="1">Component of the eukaryotic translation initiation factor 3 (eIF-3) complex.</text>
</comment>
<comment type="subcellular location">
    <subcellularLocation>
        <location evidence="1">Cytoplasm</location>
    </subcellularLocation>
</comment>
<comment type="similarity">
    <text evidence="1">Belongs to the eIF-3 subunit M family.</text>
</comment>
<name>EIF3M_NEOFI</name>
<sequence>MPAPTTTLLIEGTFTELADEFAQYIDALRKNEGASLQSEIAPLIEPLRQQEQSEEEPDRKQRDEVLKKLVGAAAVLNAAPEKEIISAYNLLVHLVHQASNPDMFLSRICTYLAKPITTSPQFGPTLAISILSTIFNTLAPTDSSRFHVLLAIVAVIRQSGSSYAFEALKPQLAAQLPTWLSAWELDDEDAQKLHLAVADAAQASGDLELAQTHVVQALQTIPANESSSKEARDLAVRALTSALKSPGVFDFTSLTAADAIQALRSSDSTLFELLEIFTADTLDAYEDFIAATPLETISGGVLADGAEALQTKMRLLTLASLAASTPSRSLPYATIASALRVPVEDVEKWVIDTIRAGLVEGKLSQLRSEFLVHRATYRVFGEKQWAEVQGRLMVWRRSLESVLGVLRTERERYIRESMQAAAEETGQGKSGDKGAKGGDRRRNPQQQQQSQPSQPQQAREVELVGGAE</sequence>
<dbReference type="EMBL" id="DS027695">
    <property type="protein sequence ID" value="EAW19422.1"/>
    <property type="molecule type" value="Genomic_DNA"/>
</dbReference>
<dbReference type="RefSeq" id="XP_001261319.1">
    <property type="nucleotide sequence ID" value="XM_001261318.1"/>
</dbReference>
<dbReference type="SMR" id="A1DC62"/>
<dbReference type="STRING" id="331117.A1DC62"/>
<dbReference type="EnsemblFungi" id="EAW19422">
    <property type="protein sequence ID" value="EAW19422"/>
    <property type="gene ID" value="NFIA_024940"/>
</dbReference>
<dbReference type="GeneID" id="4588230"/>
<dbReference type="KEGG" id="nfi:NFIA_024940"/>
<dbReference type="VEuPathDB" id="FungiDB:NFIA_024940"/>
<dbReference type="eggNOG" id="KOG2753">
    <property type="taxonomic scope" value="Eukaryota"/>
</dbReference>
<dbReference type="HOGENOM" id="CLU_035254_0_1_1"/>
<dbReference type="OMA" id="FNDEHKG"/>
<dbReference type="OrthoDB" id="10267031at2759"/>
<dbReference type="Proteomes" id="UP000006702">
    <property type="component" value="Unassembled WGS sequence"/>
</dbReference>
<dbReference type="GO" id="GO:0016282">
    <property type="term" value="C:eukaryotic 43S preinitiation complex"/>
    <property type="evidence" value="ECO:0007669"/>
    <property type="project" value="UniProtKB-UniRule"/>
</dbReference>
<dbReference type="GO" id="GO:0033290">
    <property type="term" value="C:eukaryotic 48S preinitiation complex"/>
    <property type="evidence" value="ECO:0007669"/>
    <property type="project" value="UniProtKB-UniRule"/>
</dbReference>
<dbReference type="GO" id="GO:0071541">
    <property type="term" value="C:eukaryotic translation initiation factor 3 complex, eIF3m"/>
    <property type="evidence" value="ECO:0007669"/>
    <property type="project" value="UniProtKB-UniRule"/>
</dbReference>
<dbReference type="GO" id="GO:0003743">
    <property type="term" value="F:translation initiation factor activity"/>
    <property type="evidence" value="ECO:0007669"/>
    <property type="project" value="UniProtKB-UniRule"/>
</dbReference>
<dbReference type="GO" id="GO:0001732">
    <property type="term" value="P:formation of cytoplasmic translation initiation complex"/>
    <property type="evidence" value="ECO:0007669"/>
    <property type="project" value="UniProtKB-UniRule"/>
</dbReference>
<dbReference type="HAMAP" id="MF_03012">
    <property type="entry name" value="eIF3m"/>
    <property type="match status" value="1"/>
</dbReference>
<dbReference type="InterPro" id="IPR045237">
    <property type="entry name" value="COPS7/eIF3m"/>
</dbReference>
<dbReference type="InterPro" id="IPR027528">
    <property type="entry name" value="eIF3m"/>
</dbReference>
<dbReference type="InterPro" id="IPR040750">
    <property type="entry name" value="eIF3m_C_helix"/>
</dbReference>
<dbReference type="InterPro" id="IPR000717">
    <property type="entry name" value="PCI_dom"/>
</dbReference>
<dbReference type="PANTHER" id="PTHR15350">
    <property type="entry name" value="COP9 SIGNALOSOME COMPLEX SUBUNIT 7/DENDRITIC CELL PROTEIN GA17"/>
    <property type="match status" value="1"/>
</dbReference>
<dbReference type="PANTHER" id="PTHR15350:SF2">
    <property type="entry name" value="EUKARYOTIC TRANSLATION INITIATION FACTOR 3 SUBUNIT M"/>
    <property type="match status" value="1"/>
</dbReference>
<dbReference type="Pfam" id="PF18005">
    <property type="entry name" value="eIF3m_C_helix"/>
    <property type="match status" value="1"/>
</dbReference>
<dbReference type="Pfam" id="PF01399">
    <property type="entry name" value="PCI"/>
    <property type="match status" value="1"/>
</dbReference>
<dbReference type="SMART" id="SM00088">
    <property type="entry name" value="PINT"/>
    <property type="match status" value="1"/>
</dbReference>
<dbReference type="PROSITE" id="PS50250">
    <property type="entry name" value="PCI"/>
    <property type="match status" value="1"/>
</dbReference>
<protein>
    <recommendedName>
        <fullName evidence="1">Eukaryotic translation initiation factor 3 subunit M</fullName>
        <shortName evidence="1">eIF3m</shortName>
    </recommendedName>
</protein>
<feature type="chain" id="PRO_0000366021" description="Eukaryotic translation initiation factor 3 subunit M">
    <location>
        <begin position="1"/>
        <end position="468"/>
    </location>
</feature>
<feature type="domain" description="PCI" evidence="2">
    <location>
        <begin position="206"/>
        <end position="377"/>
    </location>
</feature>
<feature type="region of interest" description="Disordered" evidence="3">
    <location>
        <begin position="42"/>
        <end position="61"/>
    </location>
</feature>
<feature type="region of interest" description="Disordered" evidence="3">
    <location>
        <begin position="418"/>
        <end position="468"/>
    </location>
</feature>
<feature type="compositionally biased region" description="Basic and acidic residues" evidence="3">
    <location>
        <begin position="430"/>
        <end position="442"/>
    </location>
</feature>
<feature type="compositionally biased region" description="Low complexity" evidence="3">
    <location>
        <begin position="444"/>
        <end position="457"/>
    </location>
</feature>
<keyword id="KW-0963">Cytoplasm</keyword>
<keyword id="KW-0396">Initiation factor</keyword>
<keyword id="KW-0648">Protein biosynthesis</keyword>
<keyword id="KW-1185">Reference proteome</keyword>